<organism>
    <name type="scientific">Mycoplasmopsis pulmonis (strain UAB CTIP)</name>
    <name type="common">Mycoplasma pulmonis</name>
    <dbReference type="NCBI Taxonomy" id="272635"/>
    <lineage>
        <taxon>Bacteria</taxon>
        <taxon>Bacillati</taxon>
        <taxon>Mycoplasmatota</taxon>
        <taxon>Mycoplasmoidales</taxon>
        <taxon>Metamycoplasmataceae</taxon>
        <taxon>Mycoplasmopsis</taxon>
    </lineage>
</organism>
<name>DEOB_MYCPU</name>
<sequence length="395" mass="44313">MVKKFKNVFMIVADSMGIGKDQKQESFGDNGANTFLHVWQNYDLQIPNLKKLGIEALVSLKDKNEDLKPQAYVGKIFAKSNAKDTLAGHWEMMGIQTKVANPNFIEKGFPDELIKELEKAFDGRKIIGNENASGTEILKRLAHREIENNEIIVYTSPDSTLQICGHEEHMGLENLYRYAKAARQICSSKSIWNVARVIARPYVGQNGSYTRTFNRHDYANKPSETLLNSLQKAKIQTIAVGKINDIFVGQAIDKVYPPASDVENMDVAIEIAKTKKENQFVFVNLVEFDSHYGHRRDVIGYGKNIDSFDKKLGELLEVLSDDDLLIITADHGNDPTFPGSSHTREALPLIVYSKAFKNPSYLKTLLGLGTSGNIVARNFGLKTIETGEDIWDKLK</sequence>
<protein>
    <recommendedName>
        <fullName evidence="1">Phosphopentomutase</fullName>
        <ecNumber evidence="1">5.4.2.7</ecNumber>
    </recommendedName>
    <alternativeName>
        <fullName evidence="1">Phosphodeoxyribomutase</fullName>
    </alternativeName>
</protein>
<gene>
    <name evidence="1" type="primary">deoB</name>
    <name type="ordered locus">MYPU_2770</name>
</gene>
<dbReference type="EC" id="5.4.2.7" evidence="1"/>
<dbReference type="EMBL" id="AL445563">
    <property type="protein sequence ID" value="CAC13450.1"/>
    <property type="molecule type" value="Genomic_DNA"/>
</dbReference>
<dbReference type="PIR" id="E90546">
    <property type="entry name" value="E90546"/>
</dbReference>
<dbReference type="RefSeq" id="WP_010925081.1">
    <property type="nucleotide sequence ID" value="NC_002771.1"/>
</dbReference>
<dbReference type="SMR" id="Q98QT4"/>
<dbReference type="STRING" id="272635.gene:17576867"/>
<dbReference type="KEGG" id="mpu:MYPU_2770"/>
<dbReference type="eggNOG" id="COG1015">
    <property type="taxonomic scope" value="Bacteria"/>
</dbReference>
<dbReference type="HOGENOM" id="CLU_053861_0_0_14"/>
<dbReference type="BioCyc" id="MPUL272635:G1GT6-278-MONOMER"/>
<dbReference type="UniPathway" id="UPA00002">
    <property type="reaction ID" value="UER00467"/>
</dbReference>
<dbReference type="Proteomes" id="UP000000528">
    <property type="component" value="Chromosome"/>
</dbReference>
<dbReference type="GO" id="GO:0005829">
    <property type="term" value="C:cytosol"/>
    <property type="evidence" value="ECO:0007669"/>
    <property type="project" value="TreeGrafter"/>
</dbReference>
<dbReference type="GO" id="GO:0000287">
    <property type="term" value="F:magnesium ion binding"/>
    <property type="evidence" value="ECO:0007669"/>
    <property type="project" value="InterPro"/>
</dbReference>
<dbReference type="GO" id="GO:0030145">
    <property type="term" value="F:manganese ion binding"/>
    <property type="evidence" value="ECO:0007669"/>
    <property type="project" value="UniProtKB-UniRule"/>
</dbReference>
<dbReference type="GO" id="GO:0008973">
    <property type="term" value="F:phosphopentomutase activity"/>
    <property type="evidence" value="ECO:0007669"/>
    <property type="project" value="UniProtKB-UniRule"/>
</dbReference>
<dbReference type="GO" id="GO:0006018">
    <property type="term" value="P:2-deoxyribose 1-phosphate catabolic process"/>
    <property type="evidence" value="ECO:0007669"/>
    <property type="project" value="UniProtKB-UniRule"/>
</dbReference>
<dbReference type="GO" id="GO:0006015">
    <property type="term" value="P:5-phosphoribose 1-diphosphate biosynthetic process"/>
    <property type="evidence" value="ECO:0007669"/>
    <property type="project" value="UniProtKB-UniPathway"/>
</dbReference>
<dbReference type="GO" id="GO:0043094">
    <property type="term" value="P:metabolic compound salvage"/>
    <property type="evidence" value="ECO:0007669"/>
    <property type="project" value="InterPro"/>
</dbReference>
<dbReference type="GO" id="GO:0009117">
    <property type="term" value="P:nucleotide metabolic process"/>
    <property type="evidence" value="ECO:0007669"/>
    <property type="project" value="InterPro"/>
</dbReference>
<dbReference type="CDD" id="cd16009">
    <property type="entry name" value="PPM"/>
    <property type="match status" value="1"/>
</dbReference>
<dbReference type="Gene3D" id="3.40.720.10">
    <property type="entry name" value="Alkaline Phosphatase, subunit A"/>
    <property type="match status" value="1"/>
</dbReference>
<dbReference type="Gene3D" id="3.30.70.1250">
    <property type="entry name" value="Phosphopentomutase"/>
    <property type="match status" value="1"/>
</dbReference>
<dbReference type="HAMAP" id="MF_00740">
    <property type="entry name" value="Phosphopentomut"/>
    <property type="match status" value="1"/>
</dbReference>
<dbReference type="InterPro" id="IPR017850">
    <property type="entry name" value="Alkaline_phosphatase_core_sf"/>
</dbReference>
<dbReference type="InterPro" id="IPR010045">
    <property type="entry name" value="DeoB"/>
</dbReference>
<dbReference type="InterPro" id="IPR006124">
    <property type="entry name" value="Metalloenzyme"/>
</dbReference>
<dbReference type="InterPro" id="IPR024052">
    <property type="entry name" value="Phosphopentomutase_DeoB_cap_sf"/>
</dbReference>
<dbReference type="NCBIfam" id="TIGR01696">
    <property type="entry name" value="deoB"/>
    <property type="match status" value="1"/>
</dbReference>
<dbReference type="NCBIfam" id="NF003766">
    <property type="entry name" value="PRK05362.1"/>
    <property type="match status" value="1"/>
</dbReference>
<dbReference type="PANTHER" id="PTHR21110">
    <property type="entry name" value="PHOSPHOPENTOMUTASE"/>
    <property type="match status" value="1"/>
</dbReference>
<dbReference type="PANTHER" id="PTHR21110:SF0">
    <property type="entry name" value="PHOSPHOPENTOMUTASE"/>
    <property type="match status" value="1"/>
</dbReference>
<dbReference type="Pfam" id="PF01676">
    <property type="entry name" value="Metalloenzyme"/>
    <property type="match status" value="1"/>
</dbReference>
<dbReference type="PIRSF" id="PIRSF001491">
    <property type="entry name" value="Ppentomutase"/>
    <property type="match status" value="1"/>
</dbReference>
<dbReference type="SUPFAM" id="SSF53649">
    <property type="entry name" value="Alkaline phosphatase-like"/>
    <property type="match status" value="1"/>
</dbReference>
<dbReference type="SUPFAM" id="SSF143856">
    <property type="entry name" value="DeoB insert domain-like"/>
    <property type="match status" value="1"/>
</dbReference>
<proteinExistence type="inferred from homology"/>
<comment type="function">
    <text evidence="1">Isomerase that catalyzes the conversion of deoxy-ribose 1-phosphate (dRib-1-P) and ribose 1-phosphate (Rib-1-P) to deoxy-ribose 5-phosphate (dRib-5-P) and ribose 5-phosphate (Rib-5-P), respectively.</text>
</comment>
<comment type="catalytic activity">
    <reaction evidence="1">
        <text>2-deoxy-alpha-D-ribose 1-phosphate = 2-deoxy-D-ribose 5-phosphate</text>
        <dbReference type="Rhea" id="RHEA:27658"/>
        <dbReference type="ChEBI" id="CHEBI:57259"/>
        <dbReference type="ChEBI" id="CHEBI:62877"/>
        <dbReference type="EC" id="5.4.2.7"/>
    </reaction>
</comment>
<comment type="catalytic activity">
    <reaction evidence="1">
        <text>alpha-D-ribose 1-phosphate = D-ribose 5-phosphate</text>
        <dbReference type="Rhea" id="RHEA:18793"/>
        <dbReference type="ChEBI" id="CHEBI:57720"/>
        <dbReference type="ChEBI" id="CHEBI:78346"/>
        <dbReference type="EC" id="5.4.2.7"/>
    </reaction>
</comment>
<comment type="cofactor">
    <cofactor evidence="1">
        <name>Mn(2+)</name>
        <dbReference type="ChEBI" id="CHEBI:29035"/>
    </cofactor>
    <text evidence="1">Binds 2 manganese ions.</text>
</comment>
<comment type="pathway">
    <text evidence="1">Carbohydrate degradation; 2-deoxy-D-ribose 1-phosphate degradation; D-glyceraldehyde 3-phosphate and acetaldehyde from 2-deoxy-alpha-D-ribose 1-phosphate: step 1/2.</text>
</comment>
<comment type="subcellular location">
    <subcellularLocation>
        <location evidence="1">Cytoplasm</location>
    </subcellularLocation>
</comment>
<comment type="similarity">
    <text evidence="1">Belongs to the phosphopentomutase family.</text>
</comment>
<feature type="chain" id="PRO_0000199830" description="Phosphopentomutase">
    <location>
        <begin position="1"/>
        <end position="395"/>
    </location>
</feature>
<feature type="binding site" evidence="1">
    <location>
        <position position="14"/>
    </location>
    <ligand>
        <name>Mn(2+)</name>
        <dbReference type="ChEBI" id="CHEBI:29035"/>
        <label>1</label>
    </ligand>
</feature>
<feature type="binding site" evidence="1">
    <location>
        <position position="289"/>
    </location>
    <ligand>
        <name>Mn(2+)</name>
        <dbReference type="ChEBI" id="CHEBI:29035"/>
        <label>2</label>
    </ligand>
</feature>
<feature type="binding site" evidence="1">
    <location>
        <position position="294"/>
    </location>
    <ligand>
        <name>Mn(2+)</name>
        <dbReference type="ChEBI" id="CHEBI:29035"/>
        <label>2</label>
    </ligand>
</feature>
<feature type="binding site" evidence="1">
    <location>
        <position position="330"/>
    </location>
    <ligand>
        <name>Mn(2+)</name>
        <dbReference type="ChEBI" id="CHEBI:29035"/>
        <label>1</label>
    </ligand>
</feature>
<feature type="binding site" evidence="1">
    <location>
        <position position="331"/>
    </location>
    <ligand>
        <name>Mn(2+)</name>
        <dbReference type="ChEBI" id="CHEBI:29035"/>
        <label>1</label>
    </ligand>
</feature>
<feature type="binding site" evidence="1">
    <location>
        <position position="342"/>
    </location>
    <ligand>
        <name>Mn(2+)</name>
        <dbReference type="ChEBI" id="CHEBI:29035"/>
        <label>2</label>
    </ligand>
</feature>
<accession>Q98QT4</accession>
<evidence type="ECO:0000255" key="1">
    <source>
        <dbReference type="HAMAP-Rule" id="MF_00740"/>
    </source>
</evidence>
<keyword id="KW-0963">Cytoplasm</keyword>
<keyword id="KW-0413">Isomerase</keyword>
<keyword id="KW-0464">Manganese</keyword>
<keyword id="KW-0479">Metal-binding</keyword>
<keyword id="KW-1185">Reference proteome</keyword>
<reference key="1">
    <citation type="journal article" date="2001" name="Nucleic Acids Res.">
        <title>The complete genome sequence of the murine respiratory pathogen Mycoplasma pulmonis.</title>
        <authorList>
            <person name="Chambaud I."/>
            <person name="Heilig R."/>
            <person name="Ferris S."/>
            <person name="Barbe V."/>
            <person name="Samson D."/>
            <person name="Galisson F."/>
            <person name="Moszer I."/>
            <person name="Dybvig K."/>
            <person name="Wroblewski H."/>
            <person name="Viari A."/>
            <person name="Rocha E.P.C."/>
            <person name="Blanchard A."/>
        </authorList>
    </citation>
    <scope>NUCLEOTIDE SEQUENCE [LARGE SCALE GENOMIC DNA]</scope>
    <source>
        <strain>UAB CTIP</strain>
    </source>
</reference>